<name>RPOB_NITV4</name>
<comment type="function">
    <text evidence="1">DNA-dependent RNA polymerase catalyzes the transcription of DNA into RNA using the four ribonucleoside triphosphates as substrates.</text>
</comment>
<comment type="catalytic activity">
    <reaction evidence="1">
        <text>RNA(n) + a ribonucleoside 5'-triphosphate = RNA(n+1) + diphosphate</text>
        <dbReference type="Rhea" id="RHEA:21248"/>
        <dbReference type="Rhea" id="RHEA-COMP:14527"/>
        <dbReference type="Rhea" id="RHEA-COMP:17342"/>
        <dbReference type="ChEBI" id="CHEBI:33019"/>
        <dbReference type="ChEBI" id="CHEBI:61557"/>
        <dbReference type="ChEBI" id="CHEBI:140395"/>
        <dbReference type="EC" id="2.7.7.6"/>
    </reaction>
</comment>
<comment type="subunit">
    <text evidence="1">The RNAP catalytic core consists of 2 alpha, 1 beta, 1 beta' and 1 omega subunit. When a sigma factor is associated with the core the holoenzyme is formed, which can initiate transcription.</text>
</comment>
<comment type="similarity">
    <text evidence="1">Belongs to the RNA polymerase beta chain family.</text>
</comment>
<proteinExistence type="inferred from homology"/>
<sequence>MGQLTKKFGKIDVSLPIPHLLNLQVDSYVKFLQEGATERRHDEGLEGVFRSVFPIEDFNRTASLEFVSYEVGEPKYDQPECISKGLTYEAPIRIKVRLVVYDVDEDSGNRTIRDIKEQEIYFGTLPLMTEKGTFIINGTERVIVNQLQRSPGIIFEHDSGKTHSSRKVLYSCRIIPMRGSWLDFDFDHKDILYVRIDRRRKMPATILFKAMGMSKTDILDYFYKKEFYRLDPMGRLMWEVQKDMYRKDSAFVDIEDGKGGTIVKAGKPITKRAWRLISEAGLETIEVAPDTIEGMFLAEDIVNPATGEVLAEAADEITASLVENLREAGISRLPVLHTKGLETSSSLRDTLVLDKTPDMEAAQVEIYRRLRPSSPPTPEIAASFFDNLFRSADYYDLSPVGRYKLNQRLGIDQSVDLRTLTDDDILRAIRVLLHLKDSHGPADDIDHLGNRRVRPVGELVENQYRIGLVRMERAIKERMSLQEVSTLMPHDLINPKPVAAVLKEFFGTSQLSQFMDQTNALSEVTHKRRLSALGPGGLTRERAGFEVRDVHTSHYGRICPIETPEGPNIGLIVSLTTYAKVNDFGFIETPYRIIREGALTDDIKFLDASREQGEVVAQANAAVDADGKLADEYVTARVRGDVLMSHRDEVTLMDISPSQMVSISAALIPFLEHDDANRALMGSNMQRQAVPLLRSEKPIVGTGMEGDVARDSGACILAEGPGIVRYADATRIIVSYENGLYPDRGGVRAYDLQKYHKSNQNSCFGQRPTCHPGQIVKKGDVLADGPGIEDGELALGKNLVVAFMPWCGYNFEDSILISERVVKEDVFTSIHIEEFEVVARDTKLGPEEITRDIPNVGEDMLRNLDGSGIIRIGASVKPDDILVGKITPKGETQLTPEEKLLRAIFGDKARDVKNTSLKVPPGIEGTIIDVKVFNRRSGEKDERTRNIEDYETARIDKKEQDHVRALGDALRDRLADTLVGKQIAVTLPGKRKGEVLAEAGAPMTRELLDALPVKRLAGLFKSREVDEMVDTALEDYDRQVAFLKGIYDSKREKVTEGDDLPPGVIKMVKVHIAVKRKLNVGDKMAGRHGNKGVVSCILPEEDMPFFADGRPVDIVLNPLGVPSRMNIGQIMETHLGWGAKELGRQLAEMLDSGAAMATLRHEVKDVFRSATIAKLVDEMDDETFRKAVSKLRTGIVTKTPVFDGASEEDIWSWIERAGMDGDGKTVLYDGRTGDKFYNRVTTGVMYILKLHHLVDEKIHARSTGPYSLVTQQPLGGKAQFGGQRLGEMEVWALEAYGASYLLQEFLTVKSDDVTGRVKMYEKIVKGDNFLEAGLPESFNVLVKELMSLGLNVTLHQEEGKKRPKRVGFMSAL</sequence>
<gene>
    <name evidence="1" type="primary">rpoB</name>
    <name type="ordered locus">Dvul_0439</name>
</gene>
<keyword id="KW-0240">DNA-directed RNA polymerase</keyword>
<keyword id="KW-0548">Nucleotidyltransferase</keyword>
<keyword id="KW-0804">Transcription</keyword>
<keyword id="KW-0808">Transferase</keyword>
<reference key="1">
    <citation type="journal article" date="2009" name="Environ. Microbiol.">
        <title>Contribution of mobile genetic elements to Desulfovibrio vulgaris genome plasticity.</title>
        <authorList>
            <person name="Walker C.B."/>
            <person name="Stolyar S."/>
            <person name="Chivian D."/>
            <person name="Pinel N."/>
            <person name="Gabster J.A."/>
            <person name="Dehal P.S."/>
            <person name="He Z."/>
            <person name="Yang Z.K."/>
            <person name="Yen H.C."/>
            <person name="Zhou J."/>
            <person name="Wall J.D."/>
            <person name="Hazen T.C."/>
            <person name="Arkin A.P."/>
            <person name="Stahl D.A."/>
        </authorList>
    </citation>
    <scope>NUCLEOTIDE SEQUENCE [LARGE SCALE GENOMIC DNA]</scope>
    <source>
        <strain>DP4</strain>
    </source>
</reference>
<accession>A1VAJ6</accession>
<protein>
    <recommendedName>
        <fullName evidence="1">DNA-directed RNA polymerase subunit beta</fullName>
        <shortName evidence="1">RNAP subunit beta</shortName>
        <ecNumber evidence="1">2.7.7.6</ecNumber>
    </recommendedName>
    <alternativeName>
        <fullName evidence="1">RNA polymerase subunit beta</fullName>
    </alternativeName>
    <alternativeName>
        <fullName evidence="1">Transcriptase subunit beta</fullName>
    </alternativeName>
</protein>
<organism>
    <name type="scientific">Nitratidesulfovibrio vulgaris (strain DP4)</name>
    <name type="common">Desulfovibrio vulgaris</name>
    <dbReference type="NCBI Taxonomy" id="391774"/>
    <lineage>
        <taxon>Bacteria</taxon>
        <taxon>Pseudomonadati</taxon>
        <taxon>Thermodesulfobacteriota</taxon>
        <taxon>Desulfovibrionia</taxon>
        <taxon>Desulfovibrionales</taxon>
        <taxon>Desulfovibrionaceae</taxon>
        <taxon>Nitratidesulfovibrio</taxon>
    </lineage>
</organism>
<evidence type="ECO:0000255" key="1">
    <source>
        <dbReference type="HAMAP-Rule" id="MF_01321"/>
    </source>
</evidence>
<dbReference type="EC" id="2.7.7.6" evidence="1"/>
<dbReference type="EMBL" id="CP000527">
    <property type="protein sequence ID" value="ABM27462.1"/>
    <property type="molecule type" value="Genomic_DNA"/>
</dbReference>
<dbReference type="RefSeq" id="WP_011791613.1">
    <property type="nucleotide sequence ID" value="NC_008751.1"/>
</dbReference>
<dbReference type="SMR" id="A1VAJ6"/>
<dbReference type="KEGG" id="dvl:Dvul_0439"/>
<dbReference type="HOGENOM" id="CLU_000524_4_0_7"/>
<dbReference type="Proteomes" id="UP000009173">
    <property type="component" value="Chromosome"/>
</dbReference>
<dbReference type="GO" id="GO:0000428">
    <property type="term" value="C:DNA-directed RNA polymerase complex"/>
    <property type="evidence" value="ECO:0007669"/>
    <property type="project" value="UniProtKB-KW"/>
</dbReference>
<dbReference type="GO" id="GO:0003677">
    <property type="term" value="F:DNA binding"/>
    <property type="evidence" value="ECO:0007669"/>
    <property type="project" value="UniProtKB-UniRule"/>
</dbReference>
<dbReference type="GO" id="GO:0003899">
    <property type="term" value="F:DNA-directed RNA polymerase activity"/>
    <property type="evidence" value="ECO:0007669"/>
    <property type="project" value="UniProtKB-UniRule"/>
</dbReference>
<dbReference type="GO" id="GO:0032549">
    <property type="term" value="F:ribonucleoside binding"/>
    <property type="evidence" value="ECO:0007669"/>
    <property type="project" value="InterPro"/>
</dbReference>
<dbReference type="GO" id="GO:0006351">
    <property type="term" value="P:DNA-templated transcription"/>
    <property type="evidence" value="ECO:0007669"/>
    <property type="project" value="UniProtKB-UniRule"/>
</dbReference>
<dbReference type="CDD" id="cd00653">
    <property type="entry name" value="RNA_pol_B_RPB2"/>
    <property type="match status" value="1"/>
</dbReference>
<dbReference type="FunFam" id="3.90.1800.10:FF:000001">
    <property type="entry name" value="DNA-directed RNA polymerase subunit beta"/>
    <property type="match status" value="1"/>
</dbReference>
<dbReference type="Gene3D" id="2.40.50.100">
    <property type="match status" value="1"/>
</dbReference>
<dbReference type="Gene3D" id="2.40.50.150">
    <property type="match status" value="1"/>
</dbReference>
<dbReference type="Gene3D" id="3.90.1100.10">
    <property type="match status" value="2"/>
</dbReference>
<dbReference type="Gene3D" id="2.40.270.10">
    <property type="entry name" value="DNA-directed RNA polymerase, subunit 2, domain 6"/>
    <property type="match status" value="2"/>
</dbReference>
<dbReference type="Gene3D" id="3.90.1800.10">
    <property type="entry name" value="RNA polymerase alpha subunit dimerisation domain"/>
    <property type="match status" value="1"/>
</dbReference>
<dbReference type="Gene3D" id="3.90.1110.10">
    <property type="entry name" value="RNA polymerase Rpb2, domain 2"/>
    <property type="match status" value="1"/>
</dbReference>
<dbReference type="HAMAP" id="MF_01321">
    <property type="entry name" value="RNApol_bact_RpoB"/>
    <property type="match status" value="1"/>
</dbReference>
<dbReference type="InterPro" id="IPR019462">
    <property type="entry name" value="DNA-dir_RNA_pol_bsu_external_1"/>
</dbReference>
<dbReference type="InterPro" id="IPR015712">
    <property type="entry name" value="DNA-dir_RNA_pol_su2"/>
</dbReference>
<dbReference type="InterPro" id="IPR007120">
    <property type="entry name" value="DNA-dir_RNAP_su2_dom"/>
</dbReference>
<dbReference type="InterPro" id="IPR037033">
    <property type="entry name" value="DNA-dir_RNAP_su2_hyb_sf"/>
</dbReference>
<dbReference type="InterPro" id="IPR010243">
    <property type="entry name" value="RNA_pol_bsu_bac"/>
</dbReference>
<dbReference type="InterPro" id="IPR007121">
    <property type="entry name" value="RNA_pol_bsu_CS"/>
</dbReference>
<dbReference type="InterPro" id="IPR007644">
    <property type="entry name" value="RNA_pol_bsu_protrusion"/>
</dbReference>
<dbReference type="InterPro" id="IPR007642">
    <property type="entry name" value="RNA_pol_Rpb2_2"/>
</dbReference>
<dbReference type="InterPro" id="IPR037034">
    <property type="entry name" value="RNA_pol_Rpb2_2_sf"/>
</dbReference>
<dbReference type="InterPro" id="IPR007645">
    <property type="entry name" value="RNA_pol_Rpb2_3"/>
</dbReference>
<dbReference type="InterPro" id="IPR007641">
    <property type="entry name" value="RNA_pol_Rpb2_7"/>
</dbReference>
<dbReference type="InterPro" id="IPR014724">
    <property type="entry name" value="RNA_pol_RPB2_OB-fold"/>
</dbReference>
<dbReference type="NCBIfam" id="NF001616">
    <property type="entry name" value="PRK00405.1"/>
    <property type="match status" value="1"/>
</dbReference>
<dbReference type="NCBIfam" id="TIGR02013">
    <property type="entry name" value="rpoB"/>
    <property type="match status" value="1"/>
</dbReference>
<dbReference type="PANTHER" id="PTHR20856">
    <property type="entry name" value="DNA-DIRECTED RNA POLYMERASE I SUBUNIT 2"/>
    <property type="match status" value="1"/>
</dbReference>
<dbReference type="Pfam" id="PF04563">
    <property type="entry name" value="RNA_pol_Rpb2_1"/>
    <property type="match status" value="1"/>
</dbReference>
<dbReference type="Pfam" id="PF04561">
    <property type="entry name" value="RNA_pol_Rpb2_2"/>
    <property type="match status" value="2"/>
</dbReference>
<dbReference type="Pfam" id="PF04565">
    <property type="entry name" value="RNA_pol_Rpb2_3"/>
    <property type="match status" value="1"/>
</dbReference>
<dbReference type="Pfam" id="PF10385">
    <property type="entry name" value="RNA_pol_Rpb2_45"/>
    <property type="match status" value="1"/>
</dbReference>
<dbReference type="Pfam" id="PF00562">
    <property type="entry name" value="RNA_pol_Rpb2_6"/>
    <property type="match status" value="1"/>
</dbReference>
<dbReference type="Pfam" id="PF04560">
    <property type="entry name" value="RNA_pol_Rpb2_7"/>
    <property type="match status" value="1"/>
</dbReference>
<dbReference type="SUPFAM" id="SSF64484">
    <property type="entry name" value="beta and beta-prime subunits of DNA dependent RNA-polymerase"/>
    <property type="match status" value="1"/>
</dbReference>
<dbReference type="PROSITE" id="PS01166">
    <property type="entry name" value="RNA_POL_BETA"/>
    <property type="match status" value="1"/>
</dbReference>
<feature type="chain" id="PRO_0000300308" description="DNA-directed RNA polymerase subunit beta">
    <location>
        <begin position="1"/>
        <end position="1372"/>
    </location>
</feature>